<name>HSPB_PSEP6</name>
<keyword id="KW-0002">3D-structure</keyword>
<keyword id="KW-0017">Alkaloid metabolism</keyword>
<keyword id="KW-0903">Direct protein sequencing</keyword>
<keyword id="KW-0274">FAD</keyword>
<keyword id="KW-0285">Flavoprotein</keyword>
<keyword id="KW-0503">Monooxygenase</keyword>
<keyword id="KW-0520">NAD</keyword>
<keyword id="KW-0560">Oxidoreductase</keyword>
<gene>
    <name evidence="4" type="primary">hspB</name>
    <name evidence="7" type="ORF">PPS_4061</name>
</gene>
<sequence>MSMKQRVIIVGGGPVGLLTALGLAKAGTNVVVLEAESQPSDSPRALVYHFPVLPHLKRLGVLDDCVAAGLMRQNFAWRVHSTSEMIFWDLSCLEGDVELPYALHLGQDKLSRILIEHLKALPNVEVRYSSPVVDCEVGPRSVRVVLGGESPGVIVEGDWLIGADGANSFVRREVLNQNFFGITWPQRYVATNTRFDFDKLGFGKTTMQVDDVYGSVICNIDADSLWRVTFMEDPNLPMEGIRGRIDQVFKELLPTNDPYEVVAFSPYRMHQRVTDRMRNGRVILIGDAAHVTNPTGGLGLTGGMFDAFALTSVLNQVIHDGRSEDILDVFEADRRRKFIELVSPRASDNLRNLYHQKPGEGKNDWVNNTRSISKDIDRMRDALRFPETMETFL</sequence>
<accession>F8G0M4</accession>
<reference key="1">
    <citation type="journal article" date="2011" name="J. Biol. Chem.">
        <title>A novel NADH-dependent and FAD-containing hydroxylase is crucial for nicotine degradation by Pseudomonas putida.</title>
        <authorList>
            <person name="Tang H."/>
            <person name="Yao Y."/>
            <person name="Zhang D."/>
            <person name="Meng X."/>
            <person name="Wang L."/>
            <person name="Yu H."/>
            <person name="Ma L."/>
            <person name="Xu P."/>
        </authorList>
    </citation>
    <scope>NUCLEOTIDE SEQUENCE [GENOMIC DNA]</scope>
    <scope>PROTEIN SEQUENCE OF 2-11</scope>
    <scope>FUNCTION</scope>
    <scope>CATALYTIC ACTIVITY</scope>
    <scope>DISRUPTION PHENOTYPE</scope>
    <scope>BIOPHYSICOCHEMICAL PROPERTIES</scope>
    <scope>COFACTOR</scope>
    <scope>ACTIVITY REGULATION</scope>
    <scope>SUBUNIT</scope>
    <source>
        <strain>DSM 28022 / S16</strain>
    </source>
</reference>
<reference key="2">
    <citation type="journal article" date="2011" name="J. Bacteriol.">
        <title>Complete genome sequence of the nicotine-degrading Pseudomonas putida strain S16.</title>
        <authorList>
            <person name="Yu H."/>
            <person name="Tang H."/>
            <person name="Wang L."/>
            <person name="Yao Y."/>
            <person name="Wu G."/>
            <person name="Xu P."/>
        </authorList>
    </citation>
    <scope>NUCLEOTIDE SEQUENCE [LARGE SCALE GENOMIC DNA]</scope>
    <source>
        <strain>DSM 28022 / S16</strain>
    </source>
</reference>
<reference key="3">
    <citation type="journal article" date="2013" name="PLoS Genet.">
        <title>Systematic unraveling of the unsolved pathway of nicotine degradation in Pseudomonas.</title>
        <authorList>
            <person name="Tang H."/>
            <person name="Wang L."/>
            <person name="Wang W."/>
            <person name="Yu H."/>
            <person name="Zhang K."/>
            <person name="Yao Y."/>
            <person name="Xu P."/>
        </authorList>
    </citation>
    <scope>INDUCTION</scope>
    <source>
        <strain>DSM 28022 / S16</strain>
    </source>
</reference>
<reference evidence="8" key="4">
    <citation type="submission" date="2020-10" db="PDB data bank">
        <title>Structure of 6-hydroxy-3-succinoyl-pyridine 3-monooxygenase (HspB) from Pseudomonas putida S16.</title>
        <authorList>
            <person name="Liu G.Q."/>
            <person name="Liu G.Q."/>
        </authorList>
    </citation>
    <scope>X-RAY CRYSTALLOGRAPHY (2.11 ANGSTROMS)</scope>
    <source>
        <strain>DSM 28022 / S16</strain>
    </source>
</reference>
<protein>
    <recommendedName>
        <fullName evidence="5">6-hydroxy-3-succinoylpyridine 3-monooxygenase HspB</fullName>
        <ecNumber evidence="2">1.14.13.163</ecNumber>
    </recommendedName>
    <alternativeName>
        <fullName evidence="4">6-hydroxy-3-succinoylpyridine hydroxylase</fullName>
        <shortName evidence="4">HSP hydroxylase</shortName>
    </alternativeName>
</protein>
<organism>
    <name type="scientific">Pseudomonas putida (strain DSM 28022 / S16)</name>
    <dbReference type="NCBI Taxonomy" id="1042876"/>
    <lineage>
        <taxon>Bacteria</taxon>
        <taxon>Pseudomonadati</taxon>
        <taxon>Pseudomonadota</taxon>
        <taxon>Gammaproteobacteria</taxon>
        <taxon>Pseudomonadales</taxon>
        <taxon>Pseudomonadaceae</taxon>
        <taxon>Pseudomonas</taxon>
    </lineage>
</organism>
<feature type="initiator methionine" description="Removed" evidence="2">
    <location>
        <position position="1"/>
    </location>
</feature>
<feature type="chain" id="PRO_0000422325" description="6-hydroxy-3-succinoylpyridine 3-monooxygenase HspB">
    <location>
        <begin position="2"/>
        <end position="393"/>
    </location>
</feature>
<feature type="binding site" evidence="1">
    <location>
        <begin position="6"/>
        <end position="35"/>
    </location>
    <ligand>
        <name>FAD</name>
        <dbReference type="ChEBI" id="CHEBI:57692"/>
    </ligand>
</feature>
<feature type="binding site" evidence="1">
    <location>
        <begin position="277"/>
        <end position="287"/>
    </location>
    <ligand>
        <name>FAD</name>
        <dbReference type="ChEBI" id="CHEBI:57692"/>
    </ligand>
</feature>
<feature type="strand" evidence="9">
    <location>
        <begin position="7"/>
        <end position="10"/>
    </location>
</feature>
<feature type="helix" evidence="9">
    <location>
        <begin position="14"/>
        <end position="25"/>
    </location>
</feature>
<feature type="strand" evidence="9">
    <location>
        <begin position="30"/>
        <end position="33"/>
    </location>
</feature>
<feature type="strand" evidence="9">
    <location>
        <begin position="35"/>
        <end position="38"/>
    </location>
</feature>
<feature type="helix" evidence="9">
    <location>
        <begin position="50"/>
        <end position="52"/>
    </location>
</feature>
<feature type="helix" evidence="9">
    <location>
        <begin position="53"/>
        <end position="58"/>
    </location>
</feature>
<feature type="helix" evidence="9">
    <location>
        <begin position="62"/>
        <end position="68"/>
    </location>
</feature>
<feature type="strand" evidence="9">
    <location>
        <begin position="69"/>
        <end position="72"/>
    </location>
</feature>
<feature type="strand" evidence="9">
    <location>
        <begin position="74"/>
        <end position="79"/>
    </location>
</feature>
<feature type="turn" evidence="9">
    <location>
        <begin position="80"/>
        <end position="83"/>
    </location>
</feature>
<feature type="strand" evidence="9">
    <location>
        <begin position="84"/>
        <end position="89"/>
    </location>
</feature>
<feature type="helix" evidence="9">
    <location>
        <begin position="90"/>
        <end position="93"/>
    </location>
</feature>
<feature type="turn" evidence="9">
    <location>
        <begin position="94"/>
        <end position="96"/>
    </location>
</feature>
<feature type="strand" evidence="9">
    <location>
        <begin position="102"/>
        <end position="104"/>
    </location>
</feature>
<feature type="helix" evidence="9">
    <location>
        <begin position="107"/>
        <end position="119"/>
    </location>
</feature>
<feature type="strand" evidence="9">
    <location>
        <begin position="124"/>
        <end position="129"/>
    </location>
</feature>
<feature type="strand" evidence="9">
    <location>
        <begin position="132"/>
        <end position="137"/>
    </location>
</feature>
<feature type="strand" evidence="9">
    <location>
        <begin position="142"/>
        <end position="146"/>
    </location>
</feature>
<feature type="strand" evidence="9">
    <location>
        <begin position="154"/>
        <end position="162"/>
    </location>
</feature>
<feature type="helix" evidence="9">
    <location>
        <begin position="169"/>
        <end position="172"/>
    </location>
</feature>
<feature type="strand" evidence="9">
    <location>
        <begin position="179"/>
        <end position="194"/>
    </location>
</feature>
<feature type="helix" evidence="9">
    <location>
        <begin position="198"/>
        <end position="200"/>
    </location>
</feature>
<feature type="strand" evidence="9">
    <location>
        <begin position="204"/>
        <end position="209"/>
    </location>
</feature>
<feature type="strand" evidence="9">
    <location>
        <begin position="211"/>
        <end position="213"/>
    </location>
</feature>
<feature type="strand" evidence="9">
    <location>
        <begin position="215"/>
        <end position="219"/>
    </location>
</feature>
<feature type="strand" evidence="9">
    <location>
        <begin position="221"/>
        <end position="232"/>
    </location>
</feature>
<feature type="helix" evidence="9">
    <location>
        <begin position="238"/>
        <end position="240"/>
    </location>
</feature>
<feature type="helix" evidence="9">
    <location>
        <begin position="241"/>
        <end position="252"/>
    </location>
</feature>
<feature type="strand" evidence="9">
    <location>
        <begin position="253"/>
        <end position="256"/>
    </location>
</feature>
<feature type="strand" evidence="9">
    <location>
        <begin position="260"/>
        <end position="275"/>
    </location>
</feature>
<feature type="strand" evidence="9">
    <location>
        <begin position="277"/>
        <end position="279"/>
    </location>
</feature>
<feature type="strand" evidence="9">
    <location>
        <begin position="282"/>
        <end position="284"/>
    </location>
</feature>
<feature type="helix" evidence="9">
    <location>
        <begin position="286"/>
        <end position="288"/>
    </location>
</feature>
<feature type="helix" evidence="9">
    <location>
        <begin position="298"/>
        <end position="319"/>
    </location>
</feature>
<feature type="helix" evidence="9">
    <location>
        <begin position="325"/>
        <end position="340"/>
    </location>
</feature>
<feature type="helix" evidence="9">
    <location>
        <begin position="342"/>
        <end position="354"/>
    </location>
</feature>
<feature type="helix" evidence="9">
    <location>
        <begin position="360"/>
        <end position="373"/>
    </location>
</feature>
<feature type="helix" evidence="9">
    <location>
        <begin position="376"/>
        <end position="383"/>
    </location>
</feature>
<feature type="helix" evidence="9">
    <location>
        <begin position="385"/>
        <end position="389"/>
    </location>
</feature>
<proteinExistence type="evidence at protein level"/>
<evidence type="ECO:0000255" key="1"/>
<evidence type="ECO:0000269" key="2">
    <source>
    </source>
</evidence>
<evidence type="ECO:0000269" key="3">
    <source>
    </source>
</evidence>
<evidence type="ECO:0000303" key="4">
    <source>
    </source>
</evidence>
<evidence type="ECO:0000305" key="5"/>
<evidence type="ECO:0000305" key="6">
    <source>
    </source>
</evidence>
<evidence type="ECO:0000312" key="7">
    <source>
        <dbReference type="EMBL" id="AEJ14602.1"/>
    </source>
</evidence>
<evidence type="ECO:0007744" key="8">
    <source>
        <dbReference type="PDB" id="7DA9"/>
    </source>
</evidence>
<evidence type="ECO:0007829" key="9">
    <source>
        <dbReference type="PDB" id="7DA9"/>
    </source>
</evidence>
<comment type="function">
    <text evidence="2">Involved in the nicotine degradation (PubMed:21949128). Catalyzes the cleavage of 6-hydroxy-3-succinoylpyridine (HSP) by incorporation of oxygen at the 3-position to produce to 2,5-dihydroxypyridine (DHP) and succinic semialdehyde (PubMed:21949128).</text>
</comment>
<comment type="catalytic activity">
    <reaction evidence="2">
        <text>4-(6-hydroxypyridin-3-yl)-4-oxobutanoate + 2 NADH + O2 + 2 H(+) = 2,5-dihydroxypyridine + succinate semialdehyde + 2 NAD(+) + H2O</text>
        <dbReference type="Rhea" id="RHEA:33927"/>
        <dbReference type="ChEBI" id="CHEBI:15377"/>
        <dbReference type="ChEBI" id="CHEBI:15378"/>
        <dbReference type="ChEBI" id="CHEBI:15379"/>
        <dbReference type="ChEBI" id="CHEBI:16364"/>
        <dbReference type="ChEBI" id="CHEBI:57540"/>
        <dbReference type="ChEBI" id="CHEBI:57706"/>
        <dbReference type="ChEBI" id="CHEBI:57945"/>
        <dbReference type="ChEBI" id="CHEBI:66893"/>
        <dbReference type="EC" id="1.14.13.163"/>
    </reaction>
</comment>
<comment type="cofactor">
    <cofactor evidence="6">
        <name>FAD</name>
        <dbReference type="ChEBI" id="CHEBI:57692"/>
    </cofactor>
    <text evidence="6">Binds 1 FAD per subunit.</text>
</comment>
<comment type="activity regulation">
    <text evidence="2">Inhibited by Cu(2+) and Zn(2+).</text>
</comment>
<comment type="biophysicochemical properties">
    <kinetics>
        <KM evidence="2">0.175 mM for HSP</KM>
        <KM evidence="2">0.2 mM for NADH</KM>
        <text evidence="2">kcat is 2 sec(-1).</text>
    </kinetics>
    <phDependence>
        <text evidence="2">Optimum pH is 8. At pH below 7.0 or above 9.0, there is substantial loss of activity.</text>
    </phDependence>
    <temperatureDependence>
        <text evidence="2">Optimum temperature is 25 degrees Celsius. The enzyme activity measured at 5 degrees Celsius is maintained up to 25 degrees Celsius but is lost quickly at higher temperatures.</text>
    </temperatureDependence>
</comment>
<comment type="pathway">
    <text evidence="6">Alkaloid degradation; nicotine degradation.</text>
</comment>
<comment type="subunit">
    <text evidence="2">Homodimer.</text>
</comment>
<comment type="induction">
    <text evidence="3">Expression is up-regulated in the presence of nicotine.</text>
</comment>
<comment type="disruption phenotype">
    <text evidence="2">Cells lacking this gene are not able to grow in nicotine medium.</text>
</comment>
<comment type="miscellaneous">
    <text evidence="6">The catalytic efficiency of HspB is higher than that of HspA.</text>
</comment>
<comment type="similarity">
    <text evidence="5">Belongs to the PheA/TfdB FAD monooxygenase family.</text>
</comment>
<dbReference type="EC" id="1.14.13.163" evidence="2"/>
<dbReference type="EMBL" id="GQ857548">
    <property type="protein sequence ID" value="ADN26547.1"/>
    <property type="molecule type" value="Genomic_DNA"/>
</dbReference>
<dbReference type="EMBL" id="CP002870">
    <property type="protein sequence ID" value="AEJ14602.1"/>
    <property type="molecule type" value="Genomic_DNA"/>
</dbReference>
<dbReference type="RefSeq" id="WP_013973865.1">
    <property type="nucleotide sequence ID" value="NC_015733.1"/>
</dbReference>
<dbReference type="PDB" id="7DA9">
    <property type="method" value="X-ray"/>
    <property type="resolution" value="2.11 A"/>
    <property type="chains" value="A/B=1-393"/>
</dbReference>
<dbReference type="PDBsum" id="7DA9"/>
<dbReference type="SMR" id="F8G0M4"/>
<dbReference type="KEGG" id="ppt:PPS_4061"/>
<dbReference type="eggNOG" id="COG0654">
    <property type="taxonomic scope" value="Bacteria"/>
</dbReference>
<dbReference type="HOGENOM" id="CLU_009665_2_2_6"/>
<dbReference type="BioCyc" id="MetaCyc:MONOMER-17159"/>
<dbReference type="BRENDA" id="1.14.13.163">
    <property type="organism ID" value="5092"/>
</dbReference>
<dbReference type="UniPathway" id="UPA00106"/>
<dbReference type="GO" id="GO:0071949">
    <property type="term" value="F:FAD binding"/>
    <property type="evidence" value="ECO:0007669"/>
    <property type="project" value="InterPro"/>
</dbReference>
<dbReference type="GO" id="GO:0004497">
    <property type="term" value="F:monooxygenase activity"/>
    <property type="evidence" value="ECO:0007669"/>
    <property type="project" value="UniProtKB-KW"/>
</dbReference>
<dbReference type="GO" id="GO:0009820">
    <property type="term" value="P:alkaloid metabolic process"/>
    <property type="evidence" value="ECO:0007669"/>
    <property type="project" value="UniProtKB-KW"/>
</dbReference>
<dbReference type="GO" id="GO:0019608">
    <property type="term" value="P:nicotine catabolic process"/>
    <property type="evidence" value="ECO:0007669"/>
    <property type="project" value="UniProtKB-UniPathway"/>
</dbReference>
<dbReference type="Gene3D" id="3.30.70.2450">
    <property type="match status" value="1"/>
</dbReference>
<dbReference type="Gene3D" id="3.50.50.60">
    <property type="entry name" value="FAD/NAD(P)-binding domain"/>
    <property type="match status" value="1"/>
</dbReference>
<dbReference type="InterPro" id="IPR002938">
    <property type="entry name" value="FAD-bd"/>
</dbReference>
<dbReference type="InterPro" id="IPR036188">
    <property type="entry name" value="FAD/NAD-bd_sf"/>
</dbReference>
<dbReference type="InterPro" id="IPR050631">
    <property type="entry name" value="PheA/TfdB_FAD_monoxygenase"/>
</dbReference>
<dbReference type="PANTHER" id="PTHR43476">
    <property type="entry name" value="3-(3-HYDROXY-PHENYL)PROPIONATE/3-HYDROXYCINNAMIC ACID HYDROXYLASE"/>
    <property type="match status" value="1"/>
</dbReference>
<dbReference type="PANTHER" id="PTHR43476:SF4">
    <property type="entry name" value="BLR0106 PROTEIN"/>
    <property type="match status" value="1"/>
</dbReference>
<dbReference type="Pfam" id="PF01494">
    <property type="entry name" value="FAD_binding_3"/>
    <property type="match status" value="1"/>
</dbReference>
<dbReference type="PRINTS" id="PR00420">
    <property type="entry name" value="RNGMNOXGNASE"/>
</dbReference>
<dbReference type="SUPFAM" id="SSF51905">
    <property type="entry name" value="FAD/NAD(P)-binding domain"/>
    <property type="match status" value="1"/>
</dbReference>